<name>YCAD_SALPA</name>
<organism>
    <name type="scientific">Salmonella paratyphi A (strain ATCC 9150 / SARB42)</name>
    <dbReference type="NCBI Taxonomy" id="295319"/>
    <lineage>
        <taxon>Bacteria</taxon>
        <taxon>Pseudomonadati</taxon>
        <taxon>Pseudomonadota</taxon>
        <taxon>Gammaproteobacteria</taxon>
        <taxon>Enterobacterales</taxon>
        <taxon>Enterobacteriaceae</taxon>
        <taxon>Salmonella</taxon>
    </lineage>
</organism>
<reference key="1">
    <citation type="journal article" date="2004" name="Nat. Genet.">
        <title>Comparison of genome degradation in Paratyphi A and Typhi, human-restricted serovars of Salmonella enterica that cause typhoid.</title>
        <authorList>
            <person name="McClelland M."/>
            <person name="Sanderson K.E."/>
            <person name="Clifton S.W."/>
            <person name="Latreille P."/>
            <person name="Porwollik S."/>
            <person name="Sabo A."/>
            <person name="Meyer R."/>
            <person name="Bieri T."/>
            <person name="Ozersky P."/>
            <person name="McLellan M."/>
            <person name="Harkins C.R."/>
            <person name="Wang C."/>
            <person name="Nguyen C."/>
            <person name="Berghoff A."/>
            <person name="Elliott G."/>
            <person name="Kohlberg S."/>
            <person name="Strong C."/>
            <person name="Du F."/>
            <person name="Carter J."/>
            <person name="Kremizki C."/>
            <person name="Layman D."/>
            <person name="Leonard S."/>
            <person name="Sun H."/>
            <person name="Fulton L."/>
            <person name="Nash W."/>
            <person name="Miner T."/>
            <person name="Minx P."/>
            <person name="Delehaunty K."/>
            <person name="Fronick C."/>
            <person name="Magrini V."/>
            <person name="Nhan M."/>
            <person name="Warren W."/>
            <person name="Florea L."/>
            <person name="Spieth J."/>
            <person name="Wilson R.K."/>
        </authorList>
    </citation>
    <scope>NUCLEOTIDE SEQUENCE [LARGE SCALE GENOMIC DNA]</scope>
    <source>
        <strain>ATCC 9150 / SARB42</strain>
    </source>
</reference>
<proteinExistence type="inferred from homology"/>
<accession>Q5PGH4</accession>
<feature type="chain" id="PRO_1000065495" description="Uncharacterized MFS-type transporter YcaD">
    <location>
        <begin position="1"/>
        <end position="382"/>
    </location>
</feature>
<feature type="transmembrane region" description="Helical" evidence="1">
    <location>
        <begin position="14"/>
        <end position="34"/>
    </location>
</feature>
<feature type="transmembrane region" description="Helical" evidence="1">
    <location>
        <begin position="45"/>
        <end position="65"/>
    </location>
</feature>
<feature type="transmembrane region" description="Helical" evidence="1">
    <location>
        <begin position="75"/>
        <end position="95"/>
    </location>
</feature>
<feature type="transmembrane region" description="Helical" evidence="1">
    <location>
        <begin position="102"/>
        <end position="122"/>
    </location>
</feature>
<feature type="transmembrane region" description="Helical" evidence="1">
    <location>
        <begin position="131"/>
        <end position="151"/>
    </location>
</feature>
<feature type="transmembrane region" description="Helical" evidence="1">
    <location>
        <begin position="157"/>
        <end position="177"/>
    </location>
</feature>
<feature type="transmembrane region" description="Helical" evidence="1">
    <location>
        <begin position="204"/>
        <end position="224"/>
    </location>
</feature>
<feature type="transmembrane region" description="Helical" evidence="1">
    <location>
        <begin position="231"/>
        <end position="251"/>
    </location>
</feature>
<feature type="transmembrane region" description="Helical" evidence="1">
    <location>
        <begin position="270"/>
        <end position="290"/>
    </location>
</feature>
<feature type="transmembrane region" description="Helical" evidence="1">
    <location>
        <begin position="291"/>
        <end position="311"/>
    </location>
</feature>
<feature type="transmembrane region" description="Helical" evidence="1">
    <location>
        <begin position="325"/>
        <end position="345"/>
    </location>
</feature>
<feature type="transmembrane region" description="Helical" evidence="1">
    <location>
        <begin position="349"/>
        <end position="369"/>
    </location>
</feature>
<gene>
    <name evidence="1" type="primary">ycaD</name>
    <name type="ordered locus">SPA1830</name>
</gene>
<evidence type="ECO:0000255" key="1">
    <source>
        <dbReference type="HAMAP-Rule" id="MF_01149"/>
    </source>
</evidence>
<dbReference type="EMBL" id="CP000026">
    <property type="protein sequence ID" value="AAV77744.1"/>
    <property type="molecule type" value="Genomic_DNA"/>
</dbReference>
<dbReference type="RefSeq" id="WP_000495738.1">
    <property type="nucleotide sequence ID" value="NC_006511.1"/>
</dbReference>
<dbReference type="SMR" id="Q5PGH4"/>
<dbReference type="KEGG" id="spt:SPA1830"/>
<dbReference type="HOGENOM" id="CLU_035018_1_2_6"/>
<dbReference type="Proteomes" id="UP000008185">
    <property type="component" value="Chromosome"/>
</dbReference>
<dbReference type="GO" id="GO:0005886">
    <property type="term" value="C:plasma membrane"/>
    <property type="evidence" value="ECO:0007669"/>
    <property type="project" value="UniProtKB-SubCell"/>
</dbReference>
<dbReference type="GO" id="GO:0022857">
    <property type="term" value="F:transmembrane transporter activity"/>
    <property type="evidence" value="ECO:0007669"/>
    <property type="project" value="UniProtKB-UniRule"/>
</dbReference>
<dbReference type="CDD" id="cd17477">
    <property type="entry name" value="MFS_YcaD_like"/>
    <property type="match status" value="1"/>
</dbReference>
<dbReference type="FunFam" id="1.20.1250.20:FF:000041">
    <property type="entry name" value="Uncharacterized MFS-type transporter YcaD"/>
    <property type="match status" value="1"/>
</dbReference>
<dbReference type="FunFam" id="1.20.1250.20:FF:000066">
    <property type="entry name" value="Uncharacterized MFS-type transporter YcaD"/>
    <property type="match status" value="1"/>
</dbReference>
<dbReference type="Gene3D" id="1.20.1250.20">
    <property type="entry name" value="MFS general substrate transporter like domains"/>
    <property type="match status" value="2"/>
</dbReference>
<dbReference type="HAMAP" id="MF_01149">
    <property type="entry name" value="MFS_YcaD"/>
    <property type="match status" value="1"/>
</dbReference>
<dbReference type="InterPro" id="IPR011701">
    <property type="entry name" value="MFS"/>
</dbReference>
<dbReference type="InterPro" id="IPR020846">
    <property type="entry name" value="MFS_dom"/>
</dbReference>
<dbReference type="InterPro" id="IPR036259">
    <property type="entry name" value="MFS_trans_sf"/>
</dbReference>
<dbReference type="InterPro" id="IPR023745">
    <property type="entry name" value="MFS_YcaD"/>
</dbReference>
<dbReference type="InterPro" id="IPR047200">
    <property type="entry name" value="MFS_YcaD-like"/>
</dbReference>
<dbReference type="NCBIfam" id="NF002962">
    <property type="entry name" value="PRK03633.1"/>
    <property type="match status" value="1"/>
</dbReference>
<dbReference type="PANTHER" id="PTHR23521">
    <property type="entry name" value="TRANSPORTER MFS SUPERFAMILY"/>
    <property type="match status" value="1"/>
</dbReference>
<dbReference type="PANTHER" id="PTHR23521:SF2">
    <property type="entry name" value="TRANSPORTER MFS SUPERFAMILY"/>
    <property type="match status" value="1"/>
</dbReference>
<dbReference type="Pfam" id="PF07690">
    <property type="entry name" value="MFS_1"/>
    <property type="match status" value="1"/>
</dbReference>
<dbReference type="SUPFAM" id="SSF103473">
    <property type="entry name" value="MFS general substrate transporter"/>
    <property type="match status" value="1"/>
</dbReference>
<dbReference type="PROSITE" id="PS50850">
    <property type="entry name" value="MFS"/>
    <property type="match status" value="1"/>
</dbReference>
<comment type="subcellular location">
    <subcellularLocation>
        <location evidence="1">Cell inner membrane</location>
        <topology evidence="1">Multi-pass membrane protein</topology>
    </subcellularLocation>
</comment>
<comment type="similarity">
    <text evidence="1">Belongs to the major facilitator superfamily. YcaD (TC 2.A.1.26) family.</text>
</comment>
<sequence>MFTYTRPVMLLLCGLLLLTLAIAVLNTLVLLWLAQANLPTWQVGMVSSSYFTGNLVGTLFTGYLIKRIGFNRSYYLASLIFAAGCVGLGVMVGFWSWMSWRFIAGIGCAMIWVVVESALMCSGTSHNRGRLLAAYMMVYYMGTFLGQLLVSKVSGELLHVLPWVTGMILAGILPLLFTRIVNQQTQTRHSSSISAMLKLRQARLGVNGCIISGIVLGSLYGLMPLYLKHQGMANASIGFWMAVLVSAGILGQWPMGRLADKFGRLLVLRVQVFVVILGSIAMLTQAAMAPALFILGAAGFTLYPVAMAWACEKVEHHQLVAMNQALLLSYTVGSLLGPSFAAMLMQNYSDNLLFIMIASVSFIYLLMLLRNAGQTPNPVAHI</sequence>
<keyword id="KW-0997">Cell inner membrane</keyword>
<keyword id="KW-1003">Cell membrane</keyword>
<keyword id="KW-0472">Membrane</keyword>
<keyword id="KW-0812">Transmembrane</keyword>
<keyword id="KW-1133">Transmembrane helix</keyword>
<keyword id="KW-0813">Transport</keyword>
<protein>
    <recommendedName>
        <fullName evidence="1">Uncharacterized MFS-type transporter YcaD</fullName>
    </recommendedName>
</protein>